<proteinExistence type="inferred from homology"/>
<reference key="1">
    <citation type="submission" date="1995-03" db="EMBL/GenBank/DDBJ databases">
        <authorList>
            <person name="Wu C."/>
            <person name="Lee M."/>
            <person name="Hsu Y."/>
        </authorList>
    </citation>
    <scope>NUCLEOTIDE SEQUENCE [GENOMIC RNA]</scope>
</reference>
<name>MVP_CMVM4</name>
<comment type="function">
    <text evidence="1">Transports viral genome to neighboring plant cells directly through plasmosdesmata, without any budding. The movement protein allows efficient cell to cell propagation, by bypassing the host cell wall barrier. Acts by forming a tubular structure at the host plasmodesmata, enlarging it enough to allow free passage of virion capsids (By similarity).</text>
</comment>
<comment type="subcellular location">
    <subcellularLocation>
        <location evidence="1">Host cell junction</location>
        <location evidence="1">Host plasmodesma</location>
    </subcellularLocation>
    <text evidence="1">Assembles into long tubular structures at the surface of the infected protoplast.</text>
</comment>
<comment type="similarity">
    <text evidence="2">Belongs to the cucumovirus movement protein family.</text>
</comment>
<evidence type="ECO:0000250" key="1"/>
<evidence type="ECO:0000305" key="2"/>
<feature type="chain" id="PRO_0000083242" description="Movement protein">
    <location>
        <begin position="1"/>
        <end position="279"/>
    </location>
</feature>
<keyword id="KW-1031">Host cell junction</keyword>
<keyword id="KW-0813">Transport</keyword>
<keyword id="KW-0916">Viral movement protein</keyword>
<dbReference type="EMBL" id="D49496">
    <property type="protein sequence ID" value="BAA08455.1"/>
    <property type="molecule type" value="Genomic_RNA"/>
</dbReference>
<dbReference type="GO" id="GO:0044219">
    <property type="term" value="C:host cell plasmodesma"/>
    <property type="evidence" value="ECO:0007669"/>
    <property type="project" value="UniProtKB-SubCell"/>
</dbReference>
<dbReference type="GO" id="GO:0046740">
    <property type="term" value="P:transport of virus in host, cell to cell"/>
    <property type="evidence" value="ECO:0007669"/>
    <property type="project" value="UniProtKB-KW"/>
</dbReference>
<dbReference type="InterPro" id="IPR000603">
    <property type="entry name" value="MPV"/>
</dbReference>
<dbReference type="Pfam" id="PF00803">
    <property type="entry name" value="3A"/>
    <property type="match status" value="1"/>
</dbReference>
<accession>Q83250</accession>
<organismHost>
    <name type="scientific">Cucumis sativus</name>
    <name type="common">Cucumber</name>
    <dbReference type="NCBI Taxonomy" id="3659"/>
</organismHost>
<organismHost>
    <name type="scientific">Solanum lycopersicum</name>
    <name type="common">Tomato</name>
    <name type="synonym">Lycopersicon esculentum</name>
    <dbReference type="NCBI Taxonomy" id="4081"/>
</organismHost>
<organismHost>
    <name type="scientific">Spinacia oleracea</name>
    <name type="common">Spinach</name>
    <dbReference type="NCBI Taxonomy" id="3562"/>
</organismHost>
<protein>
    <recommendedName>
        <fullName>Movement protein</fullName>
        <shortName>MP</shortName>
    </recommendedName>
    <alternativeName>
        <fullName>Protein 3A</fullName>
    </alternativeName>
</protein>
<sequence length="279" mass="30582">MAFQGTSRTLTQQSSAATSDELQKILFSPDAIKKMAAECDLGRHHWMRADNAISVRPLVPEVTHGRIASFFKSGYDAGELCSKGYMSVPQVLCAVTRTVSTDAEGSLRIYLADLGDKELSPIDKQCVTLHNHDLPALVSFQPTYDCPMETVGNRKRCFAVVVERHGYVGYTGTTASVCSNWQARFSSKNNNYTHIAAGKTLVLPFNRLAEQTKPSAVARLLKSQLNNIESSQYVLTDSKINQNARSESEELNVESPPVAIGSSSASRFESFRPQVVNGL</sequence>
<gene>
    <name type="ORF">ORF3a</name>
</gene>
<organism>
    <name type="scientific">Cucumber mosaic virus (strain M48)</name>
    <name type="common">CMV</name>
    <dbReference type="NCBI Taxonomy" id="117121"/>
    <lineage>
        <taxon>Viruses</taxon>
        <taxon>Riboviria</taxon>
        <taxon>Orthornavirae</taxon>
        <taxon>Kitrinoviricota</taxon>
        <taxon>Alsuviricetes</taxon>
        <taxon>Martellivirales</taxon>
        <taxon>Bromoviridae</taxon>
        <taxon>Cucumovirus</taxon>
        <taxon>Cucumber mosaic virus</taxon>
    </lineage>
</organism>